<protein>
    <recommendedName>
        <fullName>SPbeta prophage-derived uncharacterized protein YomK</fullName>
    </recommendedName>
</protein>
<feature type="chain" id="PRO_0000360593" description="SPbeta prophage-derived uncharacterized protein YomK">
    <location>
        <begin position="1"/>
        <end position="148"/>
    </location>
</feature>
<feature type="transmembrane region" description="Helical" evidence="1">
    <location>
        <begin position="72"/>
        <end position="92"/>
    </location>
</feature>
<feature type="transmembrane region" description="Helical" evidence="1">
    <location>
        <begin position="104"/>
        <end position="124"/>
    </location>
</feature>
<comment type="subcellular location">
    <subcellularLocation>
        <location evidence="2">Cell membrane</location>
        <topology evidence="2">Multi-pass membrane protein</topology>
    </subcellularLocation>
</comment>
<proteinExistence type="predicted"/>
<keyword id="KW-1003">Cell membrane</keyword>
<keyword id="KW-0472">Membrane</keyword>
<keyword id="KW-1185">Reference proteome</keyword>
<keyword id="KW-0812">Transmembrane</keyword>
<keyword id="KW-1133">Transmembrane helix</keyword>
<name>YOMK_BACSU</name>
<accession>O31974</accession>
<sequence>MFNKKVLKHNLAEMNPKELIKFIKHEFPINGQDYHTHARKVQIIKSLSPSELSSAIARMEGIKSQYDPSKTWGIGSLILGTSFIGFQVLFGVNISKITEGNRLNALIYVLITIIICLWTLRNIIKDKENATTADYLKELLIQIKSEKN</sequence>
<reference key="1">
    <citation type="journal article" date="1997" name="Nature">
        <title>The complete genome sequence of the Gram-positive bacterium Bacillus subtilis.</title>
        <authorList>
            <person name="Kunst F."/>
            <person name="Ogasawara N."/>
            <person name="Moszer I."/>
            <person name="Albertini A.M."/>
            <person name="Alloni G."/>
            <person name="Azevedo V."/>
            <person name="Bertero M.G."/>
            <person name="Bessieres P."/>
            <person name="Bolotin A."/>
            <person name="Borchert S."/>
            <person name="Borriss R."/>
            <person name="Boursier L."/>
            <person name="Brans A."/>
            <person name="Braun M."/>
            <person name="Brignell S.C."/>
            <person name="Bron S."/>
            <person name="Brouillet S."/>
            <person name="Bruschi C.V."/>
            <person name="Caldwell B."/>
            <person name="Capuano V."/>
            <person name="Carter N.M."/>
            <person name="Choi S.-K."/>
            <person name="Codani J.-J."/>
            <person name="Connerton I.F."/>
            <person name="Cummings N.J."/>
            <person name="Daniel R.A."/>
            <person name="Denizot F."/>
            <person name="Devine K.M."/>
            <person name="Duesterhoeft A."/>
            <person name="Ehrlich S.D."/>
            <person name="Emmerson P.T."/>
            <person name="Entian K.-D."/>
            <person name="Errington J."/>
            <person name="Fabret C."/>
            <person name="Ferrari E."/>
            <person name="Foulger D."/>
            <person name="Fritz C."/>
            <person name="Fujita M."/>
            <person name="Fujita Y."/>
            <person name="Fuma S."/>
            <person name="Galizzi A."/>
            <person name="Galleron N."/>
            <person name="Ghim S.-Y."/>
            <person name="Glaser P."/>
            <person name="Goffeau A."/>
            <person name="Golightly E.J."/>
            <person name="Grandi G."/>
            <person name="Guiseppi G."/>
            <person name="Guy B.J."/>
            <person name="Haga K."/>
            <person name="Haiech J."/>
            <person name="Harwood C.R."/>
            <person name="Henaut A."/>
            <person name="Hilbert H."/>
            <person name="Holsappel S."/>
            <person name="Hosono S."/>
            <person name="Hullo M.-F."/>
            <person name="Itaya M."/>
            <person name="Jones L.-M."/>
            <person name="Joris B."/>
            <person name="Karamata D."/>
            <person name="Kasahara Y."/>
            <person name="Klaerr-Blanchard M."/>
            <person name="Klein C."/>
            <person name="Kobayashi Y."/>
            <person name="Koetter P."/>
            <person name="Koningstein G."/>
            <person name="Krogh S."/>
            <person name="Kumano M."/>
            <person name="Kurita K."/>
            <person name="Lapidus A."/>
            <person name="Lardinois S."/>
            <person name="Lauber J."/>
            <person name="Lazarevic V."/>
            <person name="Lee S.-M."/>
            <person name="Levine A."/>
            <person name="Liu H."/>
            <person name="Masuda S."/>
            <person name="Mauel C."/>
            <person name="Medigue C."/>
            <person name="Medina N."/>
            <person name="Mellado R.P."/>
            <person name="Mizuno M."/>
            <person name="Moestl D."/>
            <person name="Nakai S."/>
            <person name="Noback M."/>
            <person name="Noone D."/>
            <person name="O'Reilly M."/>
            <person name="Ogawa K."/>
            <person name="Ogiwara A."/>
            <person name="Oudega B."/>
            <person name="Park S.-H."/>
            <person name="Parro V."/>
            <person name="Pohl T.M."/>
            <person name="Portetelle D."/>
            <person name="Porwollik S."/>
            <person name="Prescott A.M."/>
            <person name="Presecan E."/>
            <person name="Pujic P."/>
            <person name="Purnelle B."/>
            <person name="Rapoport G."/>
            <person name="Rey M."/>
            <person name="Reynolds S."/>
            <person name="Rieger M."/>
            <person name="Rivolta C."/>
            <person name="Rocha E."/>
            <person name="Roche B."/>
            <person name="Rose M."/>
            <person name="Sadaie Y."/>
            <person name="Sato T."/>
            <person name="Scanlan E."/>
            <person name="Schleich S."/>
            <person name="Schroeter R."/>
            <person name="Scoffone F."/>
            <person name="Sekiguchi J."/>
            <person name="Sekowska A."/>
            <person name="Seror S.J."/>
            <person name="Serror P."/>
            <person name="Shin B.-S."/>
            <person name="Soldo B."/>
            <person name="Sorokin A."/>
            <person name="Tacconi E."/>
            <person name="Takagi T."/>
            <person name="Takahashi H."/>
            <person name="Takemaru K."/>
            <person name="Takeuchi M."/>
            <person name="Tamakoshi A."/>
            <person name="Tanaka T."/>
            <person name="Terpstra P."/>
            <person name="Tognoni A."/>
            <person name="Tosato V."/>
            <person name="Uchiyama S."/>
            <person name="Vandenbol M."/>
            <person name="Vannier F."/>
            <person name="Vassarotti A."/>
            <person name="Viari A."/>
            <person name="Wambutt R."/>
            <person name="Wedler E."/>
            <person name="Wedler H."/>
            <person name="Weitzenegger T."/>
            <person name="Winters P."/>
            <person name="Wipat A."/>
            <person name="Yamamoto H."/>
            <person name="Yamane K."/>
            <person name="Yasumoto K."/>
            <person name="Yata K."/>
            <person name="Yoshida K."/>
            <person name="Yoshikawa H.-F."/>
            <person name="Zumstein E."/>
            <person name="Yoshikawa H."/>
            <person name="Danchin A."/>
        </authorList>
    </citation>
    <scope>NUCLEOTIDE SEQUENCE [LARGE SCALE GENOMIC DNA]</scope>
    <source>
        <strain>168</strain>
    </source>
</reference>
<gene>
    <name type="primary">yomK</name>
    <name type="ordered locus">BSU21330</name>
</gene>
<organism>
    <name type="scientific">Bacillus subtilis (strain 168)</name>
    <dbReference type="NCBI Taxonomy" id="224308"/>
    <lineage>
        <taxon>Bacteria</taxon>
        <taxon>Bacillati</taxon>
        <taxon>Bacillota</taxon>
        <taxon>Bacilli</taxon>
        <taxon>Bacillales</taxon>
        <taxon>Bacillaceae</taxon>
        <taxon>Bacillus</taxon>
    </lineage>
</organism>
<evidence type="ECO:0000255" key="1"/>
<evidence type="ECO:0000305" key="2"/>
<dbReference type="EMBL" id="AL009126">
    <property type="protein sequence ID" value="CAB14051.1"/>
    <property type="molecule type" value="Genomic_DNA"/>
</dbReference>
<dbReference type="RefSeq" id="NP_390016.1">
    <property type="nucleotide sequence ID" value="NC_000964.3"/>
</dbReference>
<dbReference type="RefSeq" id="WP_009967530.1">
    <property type="nucleotide sequence ID" value="NZ_OZ025638.1"/>
</dbReference>
<dbReference type="FunCoup" id="O31974">
    <property type="interactions" value="70"/>
</dbReference>
<dbReference type="STRING" id="224308.BSU21330"/>
<dbReference type="PaxDb" id="224308-BSU21330"/>
<dbReference type="EnsemblBacteria" id="CAB14051">
    <property type="protein sequence ID" value="CAB14051"/>
    <property type="gene ID" value="BSU_21330"/>
</dbReference>
<dbReference type="GeneID" id="939137"/>
<dbReference type="KEGG" id="bsu:BSU21330"/>
<dbReference type="PATRIC" id="fig|224308.179.peg.2329"/>
<dbReference type="InParanoid" id="O31974"/>
<dbReference type="OrthoDB" id="2901256at2"/>
<dbReference type="BioCyc" id="BSUB:BSU21330-MONOMER"/>
<dbReference type="Proteomes" id="UP000001570">
    <property type="component" value="Chromosome"/>
</dbReference>
<dbReference type="GO" id="GO:0005886">
    <property type="term" value="C:plasma membrane"/>
    <property type="evidence" value="ECO:0007669"/>
    <property type="project" value="UniProtKB-SubCell"/>
</dbReference>